<name>COX3_PIG</name>
<evidence type="ECO:0000250" key="1">
    <source>
        <dbReference type="UniProtKB" id="P00415"/>
    </source>
</evidence>
<evidence type="ECO:0000250" key="2">
    <source>
        <dbReference type="UniProtKB" id="P00420"/>
    </source>
</evidence>
<evidence type="ECO:0000305" key="3"/>
<accession>Q35916</accession>
<accession>O79879</accession>
<organism>
    <name type="scientific">Sus scrofa</name>
    <name type="common">Pig</name>
    <dbReference type="NCBI Taxonomy" id="9823"/>
    <lineage>
        <taxon>Eukaryota</taxon>
        <taxon>Metazoa</taxon>
        <taxon>Chordata</taxon>
        <taxon>Craniata</taxon>
        <taxon>Vertebrata</taxon>
        <taxon>Euteleostomi</taxon>
        <taxon>Mammalia</taxon>
        <taxon>Eutheria</taxon>
        <taxon>Laurasiatheria</taxon>
        <taxon>Artiodactyla</taxon>
        <taxon>Suina</taxon>
        <taxon>Suidae</taxon>
        <taxon>Sus</taxon>
    </lineage>
</organism>
<geneLocation type="mitochondrion"/>
<sequence>MTHQTHAYHMVNPSPWPLTGALSALLMTSGLTMWFHFNSMLLLSLGLLTNTLTMYQWWRDIIRESTFQGHHTSVVQKGLRYGMILFIISEVLFFTGFFWAFYHSSLAPTPELGGCWPPTGIHPLNPLEVPLLNTSILLASGVSITWAHHSLMEGDRKHMIQALSITIALGVYFTLLQASEYYEAPFTISDGVYGSTFFVATGFHGLHVIIGSTFLAVCLLRQLKFHFTSNHHFGFEAAAWYWHFVDVVWLFLYVSIYWWGS</sequence>
<proteinExistence type="evidence at protein level"/>
<protein>
    <recommendedName>
        <fullName>Cytochrome c oxidase subunit 3</fullName>
        <ecNumber>7.1.1.9</ecNumber>
    </recommendedName>
    <alternativeName>
        <fullName>Cytochrome c oxidase polypeptide III</fullName>
    </alternativeName>
</protein>
<gene>
    <name type="primary">MT-CO3</name>
    <name type="synonym">COIII</name>
    <name type="synonym">COXIII</name>
    <name type="synonym">MTCO3</name>
</gene>
<feature type="chain" id="PRO_0000183831" description="Cytochrome c oxidase subunit 3">
    <location>
        <begin position="1"/>
        <end position="261"/>
    </location>
</feature>
<feature type="topological domain" description="Mitochondrial matrix" evidence="1">
    <location>
        <begin position="1"/>
        <end position="15"/>
    </location>
</feature>
<feature type="transmembrane region" description="Helical; Name=I" evidence="1">
    <location>
        <begin position="16"/>
        <end position="34"/>
    </location>
</feature>
<feature type="topological domain" description="Mitochondrial intermembrane" evidence="1">
    <location>
        <begin position="35"/>
        <end position="40"/>
    </location>
</feature>
<feature type="transmembrane region" description="Helical; Name=II" evidence="1">
    <location>
        <begin position="41"/>
        <end position="66"/>
    </location>
</feature>
<feature type="topological domain" description="Mitochondrial matrix" evidence="1">
    <location>
        <begin position="67"/>
        <end position="72"/>
    </location>
</feature>
<feature type="transmembrane region" description="Helical; Name=III" evidence="1">
    <location>
        <begin position="73"/>
        <end position="105"/>
    </location>
</feature>
<feature type="topological domain" description="Mitochondrial intermembrane" evidence="1">
    <location>
        <begin position="106"/>
        <end position="128"/>
    </location>
</feature>
<feature type="transmembrane region" description="Helical; Name=IV" evidence="1">
    <location>
        <begin position="129"/>
        <end position="152"/>
    </location>
</feature>
<feature type="topological domain" description="Mitochondrial matrix" evidence="1">
    <location>
        <begin position="153"/>
        <end position="155"/>
    </location>
</feature>
<feature type="transmembrane region" description="Helical; Name=V" evidence="1">
    <location>
        <begin position="156"/>
        <end position="183"/>
    </location>
</feature>
<feature type="topological domain" description="Mitochondrial intermembrane" evidence="1">
    <location>
        <begin position="184"/>
        <end position="190"/>
    </location>
</feature>
<feature type="transmembrane region" description="Helical; Name=VI" evidence="1">
    <location>
        <begin position="191"/>
        <end position="223"/>
    </location>
</feature>
<feature type="topological domain" description="Mitochondrial matrix" evidence="1">
    <location>
        <begin position="224"/>
        <end position="232"/>
    </location>
</feature>
<feature type="transmembrane region" description="Helical; Name=VII" evidence="1">
    <location>
        <begin position="233"/>
        <end position="256"/>
    </location>
</feature>
<feature type="topological domain" description="Mitochondrial intermembrane" evidence="1">
    <location>
        <begin position="257"/>
        <end position="261"/>
    </location>
</feature>
<feature type="sequence conflict" description="In Ref. 3; AAA32032." evidence="3" ref="3">
    <original>LSA</original>
    <variation>YSG</variation>
    <location>
        <begin position="22"/>
        <end position="24"/>
    </location>
</feature>
<reference key="1">
    <citation type="journal article" date="1998" name="J. Mol. Evol.">
        <title>The complete mitochondrial DNA sequence of the pig (Sus scrofa).</title>
        <authorList>
            <person name="Ursing B.M."/>
            <person name="Arnason U."/>
        </authorList>
    </citation>
    <scope>NUCLEOTIDE SEQUENCE [GENOMIC DNA]</scope>
</reference>
<reference key="2">
    <citation type="journal article" date="1999" name="Gene">
        <title>Complete nucleotide sequence of pig (Sus scrofa) mitochondrial genome and dating evolutionary divergence within artiodactyla.</title>
        <authorList>
            <person name="Lin C.S."/>
            <person name="Sun Y.L."/>
            <person name="Liu C.Y."/>
            <person name="Yang P.C."/>
            <person name="Chang L.C."/>
            <person name="Cheng I.C."/>
            <person name="Mao S.J.T."/>
            <person name="Huang M.C."/>
        </authorList>
    </citation>
    <scope>NUCLEOTIDE SEQUENCE [LARGE SCALE GENOMIC DNA]</scope>
    <source>
        <strain>Landrace</strain>
    </source>
</reference>
<reference key="3">
    <citation type="journal article" date="1986" name="Biochem. Genet.">
        <title>Pig mitochondrial DNA: polymorphism, restriction map orientation, and sequence data.</title>
        <authorList>
            <person name="Watanabe T."/>
            <person name="Hayashi Y."/>
            <person name="Kimura J."/>
            <person name="Yasuda Y."/>
            <person name="Saitou N."/>
            <person name="Tomita T."/>
            <person name="Ogasawara N."/>
        </authorList>
    </citation>
    <scope>NUCLEOTIDE SEQUENCE [GENOMIC DNA] OF 1-30</scope>
</reference>
<dbReference type="EC" id="7.1.1.9"/>
<dbReference type="EMBL" id="AJ002189">
    <property type="protein sequence ID" value="CAA05235.1"/>
    <property type="status" value="ALT_INIT"/>
    <property type="molecule type" value="Genomic_DNA"/>
</dbReference>
<dbReference type="EMBL" id="AF034253">
    <property type="protein sequence ID" value="AAD34191.1"/>
    <property type="molecule type" value="Genomic_DNA"/>
</dbReference>
<dbReference type="EMBL" id="M26139">
    <property type="protein sequence ID" value="AAA32032.1"/>
    <property type="molecule type" value="Genomic_DNA"/>
</dbReference>
<dbReference type="PIR" id="T10978">
    <property type="entry name" value="T10978"/>
</dbReference>
<dbReference type="PDB" id="8UGH">
    <property type="method" value="EM"/>
    <property type="resolution" value="2.10 A"/>
    <property type="chains" value="4C=1-261"/>
</dbReference>
<dbReference type="PDB" id="8UGI">
    <property type="method" value="EM"/>
    <property type="resolution" value="2.10 A"/>
    <property type="chains" value="4C=1-261"/>
</dbReference>
<dbReference type="PDB" id="8UGJ">
    <property type="method" value="EM"/>
    <property type="resolution" value="2.30 A"/>
    <property type="chains" value="4C/8C=1-261"/>
</dbReference>
<dbReference type="PDB" id="8UGL">
    <property type="method" value="EM"/>
    <property type="resolution" value="3.00 A"/>
    <property type="chains" value="4C=1-261"/>
</dbReference>
<dbReference type="PDB" id="8UGN">
    <property type="method" value="EM"/>
    <property type="resolution" value="2.70 A"/>
    <property type="chains" value="4C/8C=1-261"/>
</dbReference>
<dbReference type="PDB" id="8UGR">
    <property type="method" value="EM"/>
    <property type="resolution" value="6.50 A"/>
    <property type="chains" value="4C/8C=1-261"/>
</dbReference>
<dbReference type="PDBsum" id="8UGH"/>
<dbReference type="PDBsum" id="8UGI"/>
<dbReference type="PDBsum" id="8UGJ"/>
<dbReference type="PDBsum" id="8UGL"/>
<dbReference type="PDBsum" id="8UGN"/>
<dbReference type="PDBsum" id="8UGR"/>
<dbReference type="EMDB" id="EMD-42225"/>
<dbReference type="EMDB" id="EMD-42226"/>
<dbReference type="EMDB" id="EMD-42227"/>
<dbReference type="EMDB" id="EMD-42229"/>
<dbReference type="EMDB" id="EMD-42230"/>
<dbReference type="EMDB" id="EMD-42233"/>
<dbReference type="SMR" id="Q35916"/>
<dbReference type="FunCoup" id="Q35916">
    <property type="interactions" value="109"/>
</dbReference>
<dbReference type="STRING" id="9823.ENSSSCP00000019141"/>
<dbReference type="GlyGen" id="Q35916">
    <property type="glycosylation" value="1 site"/>
</dbReference>
<dbReference type="PaxDb" id="9823-ENSSSCP00000019141"/>
<dbReference type="PeptideAtlas" id="Q35916"/>
<dbReference type="Ensembl" id="ENSSSCT00000019677.1">
    <property type="protein sequence ID" value="ENSSSCP00000019141.1"/>
    <property type="gene ID" value="ENSSSCG00000018082.1"/>
</dbReference>
<dbReference type="Ensembl" id="ENSSSCT00070061679.1">
    <property type="protein sequence ID" value="ENSSSCP00070052584.1"/>
    <property type="gene ID" value="ENSSSCG00070030642.1"/>
</dbReference>
<dbReference type="Ensembl" id="ENSSSCT00085000024">
    <property type="protein sequence ID" value="ENSSSCP00085000008"/>
    <property type="gene ID" value="ENSSSCG00085000024"/>
</dbReference>
<dbReference type="Ensembl" id="ENSSSCT00090000024">
    <property type="protein sequence ID" value="ENSSSCP00090000008"/>
    <property type="gene ID" value="ENSSSCG00090000024"/>
</dbReference>
<dbReference type="Ensembl" id="ENSSSCT00105000024">
    <property type="protein sequence ID" value="ENSSSCP00105000008"/>
    <property type="gene ID" value="ENSSSCG00105000024"/>
</dbReference>
<dbReference type="Ensembl" id="ENSSSCT00110000024">
    <property type="protein sequence ID" value="ENSSSCP00110000008"/>
    <property type="gene ID" value="ENSSSCG00110000024"/>
</dbReference>
<dbReference type="Ensembl" id="ENSSSCT00115000024">
    <property type="protein sequence ID" value="ENSSSCP00115000008"/>
    <property type="gene ID" value="ENSSSCG00115000024"/>
</dbReference>
<dbReference type="Ensembl" id="ENSSSCT00130000024">
    <property type="protein sequence ID" value="ENSSSCP00130000008"/>
    <property type="gene ID" value="ENSSSCG00130000024"/>
</dbReference>
<dbReference type="KEGG" id="ssc:808507"/>
<dbReference type="CTD" id="4514"/>
<dbReference type="VGNC" id="VGNC:99792">
    <property type="gene designation" value="MT-CO3"/>
</dbReference>
<dbReference type="eggNOG" id="KOG4664">
    <property type="taxonomic scope" value="Eukaryota"/>
</dbReference>
<dbReference type="GeneTree" id="ENSGT00390000013064"/>
<dbReference type="HOGENOM" id="CLU_044071_0_0_1"/>
<dbReference type="InParanoid" id="Q35916"/>
<dbReference type="OMA" id="SIYWWGS"/>
<dbReference type="OrthoDB" id="10050457at2759"/>
<dbReference type="TreeFam" id="TF343435"/>
<dbReference type="Reactome" id="R-SSC-5628897">
    <property type="pathway name" value="TP53 Regulates Metabolic Genes"/>
</dbReference>
<dbReference type="Reactome" id="R-SSC-611105">
    <property type="pathway name" value="Respiratory electron transport"/>
</dbReference>
<dbReference type="Reactome" id="R-SSC-9707564">
    <property type="pathway name" value="Cytoprotection by HMOX1"/>
</dbReference>
<dbReference type="Reactome" id="R-SSC-9864848">
    <property type="pathway name" value="Complex IV assembly"/>
</dbReference>
<dbReference type="Proteomes" id="UP000008227">
    <property type="component" value="Mitochondrion"/>
</dbReference>
<dbReference type="Proteomes" id="UP000314985">
    <property type="component" value="Mitochondrion"/>
</dbReference>
<dbReference type="Proteomes" id="UP000694570">
    <property type="component" value="Unplaced"/>
</dbReference>
<dbReference type="Proteomes" id="UP000694571">
    <property type="component" value="Unplaced"/>
</dbReference>
<dbReference type="Proteomes" id="UP000694720">
    <property type="component" value="Unplaced"/>
</dbReference>
<dbReference type="Proteomes" id="UP000694722">
    <property type="component" value="Unplaced"/>
</dbReference>
<dbReference type="Proteomes" id="UP000694723">
    <property type="component" value="Unplaced"/>
</dbReference>
<dbReference type="Proteomes" id="UP000694724">
    <property type="component" value="Unplaced"/>
</dbReference>
<dbReference type="Proteomes" id="UP000694725">
    <property type="component" value="Unplaced"/>
</dbReference>
<dbReference type="Proteomes" id="UP000694726">
    <property type="component" value="Unplaced"/>
</dbReference>
<dbReference type="Proteomes" id="UP000694727">
    <property type="component" value="Unplaced"/>
</dbReference>
<dbReference type="Proteomes" id="UP000694728">
    <property type="component" value="Unplaced"/>
</dbReference>
<dbReference type="Bgee" id="ENSSSCG00000018082">
    <property type="expression patterns" value="Expressed in psoas major muscle and 43 other cell types or tissues"/>
</dbReference>
<dbReference type="ExpressionAtlas" id="Q35916">
    <property type="expression patterns" value="baseline"/>
</dbReference>
<dbReference type="GO" id="GO:0005743">
    <property type="term" value="C:mitochondrial inner membrane"/>
    <property type="evidence" value="ECO:0007669"/>
    <property type="project" value="UniProtKB-SubCell"/>
</dbReference>
<dbReference type="GO" id="GO:0005739">
    <property type="term" value="C:mitochondrion"/>
    <property type="evidence" value="ECO:0000318"/>
    <property type="project" value="GO_Central"/>
</dbReference>
<dbReference type="GO" id="GO:0045277">
    <property type="term" value="C:respiratory chain complex IV"/>
    <property type="evidence" value="ECO:0000250"/>
    <property type="project" value="UniProtKB"/>
</dbReference>
<dbReference type="GO" id="GO:0004129">
    <property type="term" value="F:cytochrome-c oxidase activity"/>
    <property type="evidence" value="ECO:0007669"/>
    <property type="project" value="UniProtKB-EC"/>
</dbReference>
<dbReference type="GO" id="GO:0006123">
    <property type="term" value="P:mitochondrial electron transport, cytochrome c to oxygen"/>
    <property type="evidence" value="ECO:0000318"/>
    <property type="project" value="GO_Central"/>
</dbReference>
<dbReference type="GO" id="GO:0008535">
    <property type="term" value="P:respiratory chain complex IV assembly"/>
    <property type="evidence" value="ECO:0000250"/>
    <property type="project" value="UniProtKB"/>
</dbReference>
<dbReference type="CDD" id="cd01665">
    <property type="entry name" value="Cyt_c_Oxidase_III"/>
    <property type="match status" value="1"/>
</dbReference>
<dbReference type="FunFam" id="1.10.287.70:FF:000048">
    <property type="entry name" value="Cytochrome c oxidase subunit 3"/>
    <property type="match status" value="1"/>
</dbReference>
<dbReference type="FunFam" id="1.20.120.80:FF:000002">
    <property type="entry name" value="Cytochrome c oxidase subunit 3"/>
    <property type="match status" value="1"/>
</dbReference>
<dbReference type="Gene3D" id="1.10.287.70">
    <property type="match status" value="1"/>
</dbReference>
<dbReference type="Gene3D" id="1.20.120.80">
    <property type="entry name" value="Cytochrome c oxidase, subunit III, four-helix bundle"/>
    <property type="match status" value="1"/>
</dbReference>
<dbReference type="InterPro" id="IPR024791">
    <property type="entry name" value="Cyt_c/ubiquinol_Oxase_su3"/>
</dbReference>
<dbReference type="InterPro" id="IPR033945">
    <property type="entry name" value="Cyt_c_oxase_su3_dom"/>
</dbReference>
<dbReference type="InterPro" id="IPR000298">
    <property type="entry name" value="Cyt_c_oxidase-like_su3"/>
</dbReference>
<dbReference type="InterPro" id="IPR035973">
    <property type="entry name" value="Cyt_c_oxidase_su3-like_sf"/>
</dbReference>
<dbReference type="InterPro" id="IPR013833">
    <property type="entry name" value="Cyt_c_oxidase_su3_a-hlx"/>
</dbReference>
<dbReference type="PANTHER" id="PTHR11403:SF7">
    <property type="entry name" value="CYTOCHROME C OXIDASE SUBUNIT 3"/>
    <property type="match status" value="1"/>
</dbReference>
<dbReference type="PANTHER" id="PTHR11403">
    <property type="entry name" value="CYTOCHROME C OXIDASE SUBUNIT III"/>
    <property type="match status" value="1"/>
</dbReference>
<dbReference type="Pfam" id="PF00510">
    <property type="entry name" value="COX3"/>
    <property type="match status" value="1"/>
</dbReference>
<dbReference type="SUPFAM" id="SSF81452">
    <property type="entry name" value="Cytochrome c oxidase subunit III-like"/>
    <property type="match status" value="1"/>
</dbReference>
<dbReference type="PROSITE" id="PS50253">
    <property type="entry name" value="COX3"/>
    <property type="match status" value="1"/>
</dbReference>
<keyword id="KW-0002">3D-structure</keyword>
<keyword id="KW-0472">Membrane</keyword>
<keyword id="KW-0496">Mitochondrion</keyword>
<keyword id="KW-0999">Mitochondrion inner membrane</keyword>
<keyword id="KW-1185">Reference proteome</keyword>
<keyword id="KW-1278">Translocase</keyword>
<keyword id="KW-0812">Transmembrane</keyword>
<keyword id="KW-1133">Transmembrane helix</keyword>
<comment type="function">
    <text evidence="2">Component of the cytochrome c oxidase, the last enzyme in the mitochondrial electron transport chain which drives oxidative phosphorylation. The respiratory chain contains 3 multisubunit complexes succinate dehydrogenase (complex II, CII), ubiquinol-cytochrome c oxidoreductase (cytochrome b-c1 complex, complex III, CIII) and cytochrome c oxidase (complex IV, CIV), that cooperate to transfer electrons derived from NADH and succinate to molecular oxygen, creating an electrochemical gradient over the inner membrane that drives transmembrane transport and the ATP synthase. Cytochrome c oxidase is the component of the respiratory chain that catalyzes the reduction of oxygen to water. Electrons originating from reduced cytochrome c in the intermembrane space (IMS) are transferred via the dinuclear copper A center (CU(A)) of subunit 2 and heme A of subunit 1 to the active site in subunit 1, a binuclear center (BNC) formed by heme A3 and copper B (CU(B)). The BNC reduces molecular oxygen to 2 water molecules using 4 electrons from cytochrome c in the IMS and 4 protons from the mitochondrial matrix.</text>
</comment>
<comment type="catalytic activity">
    <reaction evidence="2">
        <text>4 Fe(II)-[cytochrome c] + O2 + 8 H(+)(in) = 4 Fe(III)-[cytochrome c] + 2 H2O + 4 H(+)(out)</text>
        <dbReference type="Rhea" id="RHEA:11436"/>
        <dbReference type="Rhea" id="RHEA-COMP:10350"/>
        <dbReference type="Rhea" id="RHEA-COMP:14399"/>
        <dbReference type="ChEBI" id="CHEBI:15377"/>
        <dbReference type="ChEBI" id="CHEBI:15378"/>
        <dbReference type="ChEBI" id="CHEBI:15379"/>
        <dbReference type="ChEBI" id="CHEBI:29033"/>
        <dbReference type="ChEBI" id="CHEBI:29034"/>
        <dbReference type="EC" id="7.1.1.9"/>
    </reaction>
    <physiologicalReaction direction="left-to-right" evidence="2">
        <dbReference type="Rhea" id="RHEA:11437"/>
    </physiologicalReaction>
</comment>
<comment type="subunit">
    <text evidence="1">Component of the cytochrome c oxidase (complex IV, CIV), a multisubunit enzyme composed of 14 subunits. The complex is composed of a catalytic core of 3 subunits MT-CO1, MT-CO2 and MT-CO3, encoded in the mitochondrial DNA, and 11 supernumerary subunits COX4I, COX5A, COX5B, COX6A, COX6B, COX6C, COX7A, COX7B, COX7C, COX8 and NDUFA4, which are encoded in the nuclear genome. The complex exists as a monomer or a dimer and forms supercomplexes (SCs) in the inner mitochondrial membrane with NADH-ubiquinone oxidoreductase (complex I, CI) and ubiquinol-cytochrome c oxidoreductase (cytochrome b-c1 complex, complex III, CIII), resulting in different assemblies (supercomplex SCI(1)III(2)IV(1) and megacomplex MCI(2)III(2)IV(2)).</text>
</comment>
<comment type="subcellular location">
    <subcellularLocation>
        <location evidence="1">Mitochondrion inner membrane</location>
        <topology evidence="1">Multi-pass membrane protein</topology>
    </subcellularLocation>
</comment>
<comment type="similarity">
    <text evidence="3">Belongs to the cytochrome c oxidase subunit 3 family.</text>
</comment>
<comment type="sequence caution" evidence="3">
    <conflict type="erroneous initiation">
        <sequence resource="EMBL-CDS" id="CAA05235"/>
    </conflict>
</comment>